<organism>
    <name type="scientific">Orgyia pseudotsugata multicapsid polyhedrosis virus</name>
    <name type="common">OpMNPV</name>
    <dbReference type="NCBI Taxonomy" id="262177"/>
    <lineage>
        <taxon>Viruses</taxon>
        <taxon>Viruses incertae sedis</taxon>
        <taxon>Naldaviricetes</taxon>
        <taxon>Lefavirales</taxon>
        <taxon>Baculoviridae</taxon>
        <taxon>Alphabaculovirus</taxon>
        <taxon>Alphabaculovirus orpseudotsugatae</taxon>
    </lineage>
</organism>
<evidence type="ECO:0000250" key="1"/>
<evidence type="ECO:0000305" key="2"/>
<organismHost>
    <name type="scientific">Orgyia pseudotsugata</name>
    <name type="common">Douglas-fir tussock moth</name>
    <dbReference type="NCBI Taxonomy" id="33414"/>
</organismHost>
<keyword id="KW-0244">Early protein</keyword>
<keyword id="KW-1185">Reference proteome</keyword>
<keyword id="KW-0804">Transcription</keyword>
<keyword id="KW-0805">Transcription regulation</keyword>
<accession>Q65362</accession>
<accession>O12552</accession>
<accession>O12841</accession>
<protein>
    <recommendedName>
        <fullName>Late expression factor 1</fullName>
    </recommendedName>
</protein>
<name>LEF1_NPVOP</name>
<feature type="chain" id="PRO_0000132817" description="Late expression factor 1">
    <location>
        <begin position="1"/>
        <end position="243"/>
    </location>
</feature>
<sequence length="243" mass="27874">MAPCKYTPERVQMMWDAIAYNDSRRLAFMTDRPRWVHAHNFFDSAAQLFAYIVKNSISDVHVKPLEEGGREWVIDADFKDCADKAELMLKVNVGATAFMLFFEGKEDAVQRIMFSGNRGFHLWLKFCGKFKMDAPKSLREHWFNVFKQPAKLVSGDIRPGSFADCVRRAVHMYIGDAREDLVLRYWPDVDRDVFCNANKQIRAPFSYNYKGGDYSRCLTQQLQQRIKACSAGCLAGGTPPTSK</sequence>
<proteinExistence type="inferred from homology"/>
<gene>
    <name type="primary">LEF-1</name>
    <name type="ORF">ORF13</name>
</gene>
<reference key="1">
    <citation type="journal article" date="1993" name="Virology">
        <title>Identification and characterization of a putative origin of DNA replication in the genome of a baculovirus pathogenic for Orgyia pseudotsugata.</title>
        <authorList>
            <person name="Pearson M.N."/>
            <person name="Bjornson R.M."/>
            <person name="Ahrens C.H."/>
            <person name="Rohrmann G.F."/>
        </authorList>
    </citation>
    <scope>NUCLEOTIDE SEQUENCE [GENOMIC DNA]</scope>
</reference>
<reference key="2">
    <citation type="journal article" date="1995" name="Virology">
        <title>Identification of essential trans-acting regions required for DNA replication of the Orgyia pseudotsugata multinucleocapsid nuclear polyhedrosis virus: lef-1 is an essential replication gene.</title>
        <authorList>
            <person name="Ahrens C.H."/>
            <person name="Rohrmann G.F."/>
        </authorList>
    </citation>
    <scope>NUCLEOTIDE SEQUENCE [GENOMIC DNA]</scope>
</reference>
<reference key="3">
    <citation type="journal article" date="1997" name="Virology">
        <title>The sequence of the Orgyia pseudotsugata multinucleocapsid nuclear polyhedrosis virus genome.</title>
        <authorList>
            <person name="Ahrens C.H."/>
            <person name="Russell R.R."/>
            <person name="Funk C.J."/>
            <person name="Evans J."/>
            <person name="Harwood S."/>
            <person name="Rohrmann G.F."/>
        </authorList>
    </citation>
    <scope>NUCLEOTIDE SEQUENCE [LARGE SCALE GENOMIC DNA]</scope>
</reference>
<comment type="function">
    <text evidence="1">Required for late and very late gene expression.</text>
</comment>
<comment type="similarity">
    <text evidence="2">Belongs to the baculoviridae LEF-1 family.</text>
</comment>
<dbReference type="EMBL" id="D17353">
    <property type="protein sequence ID" value="BAA04171.1"/>
    <property type="molecule type" value="Genomic_DNA"/>
</dbReference>
<dbReference type="EMBL" id="U75930">
    <property type="protein sequence ID" value="AAC59012.1"/>
    <property type="molecule type" value="Genomic_DNA"/>
</dbReference>
<dbReference type="RefSeq" id="NP_046169.1">
    <property type="nucleotide sequence ID" value="NC_001875.2"/>
</dbReference>
<dbReference type="KEGG" id="vg:912073"/>
<dbReference type="OrthoDB" id="18354at10239"/>
<dbReference type="Proteomes" id="UP000009248">
    <property type="component" value="Genome"/>
</dbReference>
<dbReference type="GO" id="GO:0003677">
    <property type="term" value="F:DNA binding"/>
    <property type="evidence" value="ECO:0000250"/>
    <property type="project" value="UniProtKB"/>
</dbReference>
<dbReference type="GO" id="GO:0003899">
    <property type="term" value="F:DNA-directed RNA polymerase activity"/>
    <property type="evidence" value="ECO:0000250"/>
    <property type="project" value="UniProtKB"/>
</dbReference>
<dbReference type="GO" id="GO:0019079">
    <property type="term" value="P:viral genome replication"/>
    <property type="evidence" value="ECO:0000250"/>
    <property type="project" value="UniProtKB"/>
</dbReference>
<dbReference type="Gene3D" id="3.90.920.10">
    <property type="entry name" value="DNA primase, PRIM domain"/>
    <property type="match status" value="1"/>
</dbReference>
<dbReference type="InterPro" id="IPR016658">
    <property type="entry name" value="DNA_primase_LEF1"/>
</dbReference>
<dbReference type="PIRSF" id="PIRSF016433">
    <property type="entry name" value="Viral_DNA_prim"/>
    <property type="match status" value="1"/>
</dbReference>
<dbReference type="SUPFAM" id="SSF56747">
    <property type="entry name" value="Prim-pol domain"/>
    <property type="match status" value="1"/>
</dbReference>